<reference key="1">
    <citation type="journal article" date="2003" name="Science">
        <title>A genomic view of the human-Bacteroides thetaiotaomicron symbiosis.</title>
        <authorList>
            <person name="Xu J."/>
            <person name="Bjursell M.K."/>
            <person name="Himrod J."/>
            <person name="Deng S."/>
            <person name="Carmichael L.K."/>
            <person name="Chiang H.C."/>
            <person name="Hooper L.V."/>
            <person name="Gordon J.I."/>
        </authorList>
    </citation>
    <scope>NUCLEOTIDE SEQUENCE [LARGE SCALE GENOMIC DNA]</scope>
    <source>
        <strain>ATCC 29148 / DSM 2079 / JCM 5827 / CCUG 10774 / NCTC 10582 / VPI-5482 / E50</strain>
    </source>
</reference>
<gene>
    <name evidence="1" type="primary">miaB</name>
    <name type="ordered locus">BT_3195</name>
</gene>
<proteinExistence type="inferred from homology"/>
<dbReference type="EC" id="2.8.4.3" evidence="1"/>
<dbReference type="EMBL" id="AE015928">
    <property type="protein sequence ID" value="AAO78301.1"/>
    <property type="molecule type" value="Genomic_DNA"/>
</dbReference>
<dbReference type="RefSeq" id="NP_812107.1">
    <property type="nucleotide sequence ID" value="NC_004663.1"/>
</dbReference>
<dbReference type="RefSeq" id="WP_008767433.1">
    <property type="nucleotide sequence ID" value="NC_004663.1"/>
</dbReference>
<dbReference type="SMR" id="Q8A2W0"/>
<dbReference type="FunCoup" id="Q8A2W0">
    <property type="interactions" value="526"/>
</dbReference>
<dbReference type="STRING" id="226186.BT_3195"/>
<dbReference type="PaxDb" id="226186-BT_3195"/>
<dbReference type="DNASU" id="1075308"/>
<dbReference type="EnsemblBacteria" id="AAO78301">
    <property type="protein sequence ID" value="AAO78301"/>
    <property type="gene ID" value="BT_3195"/>
</dbReference>
<dbReference type="GeneID" id="60924374"/>
<dbReference type="KEGG" id="bth:BT_3195"/>
<dbReference type="PATRIC" id="fig|226186.12.peg.3258"/>
<dbReference type="eggNOG" id="COG0621">
    <property type="taxonomic scope" value="Bacteria"/>
</dbReference>
<dbReference type="HOGENOM" id="CLU_018697_2_0_10"/>
<dbReference type="InParanoid" id="Q8A2W0"/>
<dbReference type="OrthoDB" id="9805215at2"/>
<dbReference type="Proteomes" id="UP000001414">
    <property type="component" value="Chromosome"/>
</dbReference>
<dbReference type="GO" id="GO:0005829">
    <property type="term" value="C:cytosol"/>
    <property type="evidence" value="ECO:0000318"/>
    <property type="project" value="GO_Central"/>
</dbReference>
<dbReference type="GO" id="GO:0051539">
    <property type="term" value="F:4 iron, 4 sulfur cluster binding"/>
    <property type="evidence" value="ECO:0000318"/>
    <property type="project" value="GO_Central"/>
</dbReference>
<dbReference type="GO" id="GO:0046872">
    <property type="term" value="F:metal ion binding"/>
    <property type="evidence" value="ECO:0007669"/>
    <property type="project" value="UniProtKB-KW"/>
</dbReference>
<dbReference type="GO" id="GO:0035597">
    <property type="term" value="F:N6-isopentenyladenosine methylthiotransferase activity"/>
    <property type="evidence" value="ECO:0000318"/>
    <property type="project" value="GO_Central"/>
</dbReference>
<dbReference type="GO" id="GO:0035600">
    <property type="term" value="P:tRNA methylthiolation"/>
    <property type="evidence" value="ECO:0000318"/>
    <property type="project" value="GO_Central"/>
</dbReference>
<dbReference type="CDD" id="cd01335">
    <property type="entry name" value="Radical_SAM"/>
    <property type="match status" value="1"/>
</dbReference>
<dbReference type="FunFam" id="3.40.50.12160:FF:000003">
    <property type="entry name" value="CDK5 regulatory subunit-associated protein 1"/>
    <property type="match status" value="1"/>
</dbReference>
<dbReference type="FunFam" id="3.80.30.20:FF:000005">
    <property type="entry name" value="tRNA-2-methylthio-N(6)-dimethylallyladenosine synthase"/>
    <property type="match status" value="1"/>
</dbReference>
<dbReference type="Gene3D" id="3.40.50.12160">
    <property type="entry name" value="Methylthiotransferase, N-terminal domain"/>
    <property type="match status" value="1"/>
</dbReference>
<dbReference type="Gene3D" id="3.80.30.20">
    <property type="entry name" value="tm_1862 like domain"/>
    <property type="match status" value="1"/>
</dbReference>
<dbReference type="HAMAP" id="MF_01864">
    <property type="entry name" value="tRNA_metthiotr_MiaB"/>
    <property type="match status" value="1"/>
</dbReference>
<dbReference type="InterPro" id="IPR006638">
    <property type="entry name" value="Elp3/MiaA/NifB-like_rSAM"/>
</dbReference>
<dbReference type="InterPro" id="IPR005839">
    <property type="entry name" value="Methylthiotransferase"/>
</dbReference>
<dbReference type="InterPro" id="IPR020612">
    <property type="entry name" value="Methylthiotransferase_CS"/>
</dbReference>
<dbReference type="InterPro" id="IPR013848">
    <property type="entry name" value="Methylthiotransferase_N"/>
</dbReference>
<dbReference type="InterPro" id="IPR038135">
    <property type="entry name" value="Methylthiotransferase_N_sf"/>
</dbReference>
<dbReference type="InterPro" id="IPR006463">
    <property type="entry name" value="MiaB_methiolase"/>
</dbReference>
<dbReference type="InterPro" id="IPR007197">
    <property type="entry name" value="rSAM"/>
</dbReference>
<dbReference type="InterPro" id="IPR023404">
    <property type="entry name" value="rSAM_horseshoe"/>
</dbReference>
<dbReference type="InterPro" id="IPR002792">
    <property type="entry name" value="TRAM_dom"/>
</dbReference>
<dbReference type="NCBIfam" id="TIGR01574">
    <property type="entry name" value="miaB-methiolase"/>
    <property type="match status" value="1"/>
</dbReference>
<dbReference type="NCBIfam" id="TIGR00089">
    <property type="entry name" value="MiaB/RimO family radical SAM methylthiotransferase"/>
    <property type="match status" value="1"/>
</dbReference>
<dbReference type="PANTHER" id="PTHR43020">
    <property type="entry name" value="CDK5 REGULATORY SUBUNIT-ASSOCIATED PROTEIN 1"/>
    <property type="match status" value="1"/>
</dbReference>
<dbReference type="PANTHER" id="PTHR43020:SF2">
    <property type="entry name" value="MITOCHONDRIAL TRNA METHYLTHIOTRANSFERASE CDK5RAP1"/>
    <property type="match status" value="1"/>
</dbReference>
<dbReference type="Pfam" id="PF04055">
    <property type="entry name" value="Radical_SAM"/>
    <property type="match status" value="1"/>
</dbReference>
<dbReference type="Pfam" id="PF01938">
    <property type="entry name" value="TRAM"/>
    <property type="match status" value="1"/>
</dbReference>
<dbReference type="Pfam" id="PF00919">
    <property type="entry name" value="UPF0004"/>
    <property type="match status" value="1"/>
</dbReference>
<dbReference type="SFLD" id="SFLDF00273">
    <property type="entry name" value="(dimethylallyl)adenosine_tRNA"/>
    <property type="match status" value="1"/>
</dbReference>
<dbReference type="SFLD" id="SFLDG01082">
    <property type="entry name" value="B12-binding_domain_containing"/>
    <property type="match status" value="1"/>
</dbReference>
<dbReference type="SFLD" id="SFLDF00413">
    <property type="entry name" value="CDK5RAP1"/>
    <property type="match status" value="1"/>
</dbReference>
<dbReference type="SFLD" id="SFLDS00029">
    <property type="entry name" value="Radical_SAM"/>
    <property type="match status" value="1"/>
</dbReference>
<dbReference type="SMART" id="SM00729">
    <property type="entry name" value="Elp3"/>
    <property type="match status" value="1"/>
</dbReference>
<dbReference type="SUPFAM" id="SSF102114">
    <property type="entry name" value="Radical SAM enzymes"/>
    <property type="match status" value="1"/>
</dbReference>
<dbReference type="PROSITE" id="PS51449">
    <property type="entry name" value="MTTASE_N"/>
    <property type="match status" value="1"/>
</dbReference>
<dbReference type="PROSITE" id="PS01278">
    <property type="entry name" value="MTTASE_RADICAL"/>
    <property type="match status" value="1"/>
</dbReference>
<dbReference type="PROSITE" id="PS51918">
    <property type="entry name" value="RADICAL_SAM"/>
    <property type="match status" value="1"/>
</dbReference>
<dbReference type="PROSITE" id="PS50926">
    <property type="entry name" value="TRAM"/>
    <property type="match status" value="1"/>
</dbReference>
<protein>
    <recommendedName>
        <fullName evidence="1">tRNA-2-methylthio-N(6)-dimethylallyladenosine synthase</fullName>
        <ecNumber evidence="1">2.8.4.3</ecNumber>
    </recommendedName>
    <alternativeName>
        <fullName evidence="1">(Dimethylallyl)adenosine tRNA methylthiotransferase MiaB</fullName>
    </alternativeName>
    <alternativeName>
        <fullName evidence="1">tRNA-i(6)A37 methylthiotransferase</fullName>
    </alternativeName>
</protein>
<name>MIAB_BACTN</name>
<organism>
    <name type="scientific">Bacteroides thetaiotaomicron (strain ATCC 29148 / DSM 2079 / JCM 5827 / CCUG 10774 / NCTC 10582 / VPI-5482 / E50)</name>
    <dbReference type="NCBI Taxonomy" id="226186"/>
    <lineage>
        <taxon>Bacteria</taxon>
        <taxon>Pseudomonadati</taxon>
        <taxon>Bacteroidota</taxon>
        <taxon>Bacteroidia</taxon>
        <taxon>Bacteroidales</taxon>
        <taxon>Bacteroidaceae</taxon>
        <taxon>Bacteroides</taxon>
    </lineage>
</organism>
<accession>Q8A2W0</accession>
<keyword id="KW-0004">4Fe-4S</keyword>
<keyword id="KW-0963">Cytoplasm</keyword>
<keyword id="KW-0408">Iron</keyword>
<keyword id="KW-0411">Iron-sulfur</keyword>
<keyword id="KW-0479">Metal-binding</keyword>
<keyword id="KW-1185">Reference proteome</keyword>
<keyword id="KW-0949">S-adenosyl-L-methionine</keyword>
<keyword id="KW-0808">Transferase</keyword>
<keyword id="KW-0819">tRNA processing</keyword>
<feature type="chain" id="PRO_0000374142" description="tRNA-2-methylthio-N(6)-dimethylallyladenosine synthase">
    <location>
        <begin position="1"/>
        <end position="455"/>
    </location>
</feature>
<feature type="domain" description="MTTase N-terminal" evidence="1">
    <location>
        <begin position="18"/>
        <end position="133"/>
    </location>
</feature>
<feature type="domain" description="Radical SAM core" evidence="2">
    <location>
        <begin position="157"/>
        <end position="390"/>
    </location>
</feature>
<feature type="domain" description="TRAM" evidence="1">
    <location>
        <begin position="393"/>
        <end position="455"/>
    </location>
</feature>
<feature type="binding site" evidence="1">
    <location>
        <position position="27"/>
    </location>
    <ligand>
        <name>[4Fe-4S] cluster</name>
        <dbReference type="ChEBI" id="CHEBI:49883"/>
        <label>1</label>
    </ligand>
</feature>
<feature type="binding site" evidence="1">
    <location>
        <position position="63"/>
    </location>
    <ligand>
        <name>[4Fe-4S] cluster</name>
        <dbReference type="ChEBI" id="CHEBI:49883"/>
        <label>1</label>
    </ligand>
</feature>
<feature type="binding site" evidence="1">
    <location>
        <position position="97"/>
    </location>
    <ligand>
        <name>[4Fe-4S] cluster</name>
        <dbReference type="ChEBI" id="CHEBI:49883"/>
        <label>1</label>
    </ligand>
</feature>
<feature type="binding site" evidence="1">
    <location>
        <position position="171"/>
    </location>
    <ligand>
        <name>[4Fe-4S] cluster</name>
        <dbReference type="ChEBI" id="CHEBI:49883"/>
        <label>2</label>
        <note>4Fe-4S-S-AdoMet</note>
    </ligand>
</feature>
<feature type="binding site" evidence="1">
    <location>
        <position position="175"/>
    </location>
    <ligand>
        <name>[4Fe-4S] cluster</name>
        <dbReference type="ChEBI" id="CHEBI:49883"/>
        <label>2</label>
        <note>4Fe-4S-S-AdoMet</note>
    </ligand>
</feature>
<feature type="binding site" evidence="1">
    <location>
        <position position="178"/>
    </location>
    <ligand>
        <name>[4Fe-4S] cluster</name>
        <dbReference type="ChEBI" id="CHEBI:49883"/>
        <label>2</label>
        <note>4Fe-4S-S-AdoMet</note>
    </ligand>
</feature>
<evidence type="ECO:0000255" key="1">
    <source>
        <dbReference type="HAMAP-Rule" id="MF_01864"/>
    </source>
</evidence>
<evidence type="ECO:0000255" key="2">
    <source>
        <dbReference type="PROSITE-ProRule" id="PRU01266"/>
    </source>
</evidence>
<comment type="function">
    <text evidence="1">Catalyzes the methylthiolation of N6-(dimethylallyl)adenosine (i(6)A), leading to the formation of 2-methylthio-N6-(dimethylallyl)adenosine (ms(2)i(6)A) at position 37 in tRNAs that read codons beginning with uridine.</text>
</comment>
<comment type="catalytic activity">
    <reaction evidence="1">
        <text>N(6)-dimethylallyladenosine(37) in tRNA + (sulfur carrier)-SH + AH2 + 2 S-adenosyl-L-methionine = 2-methylsulfanyl-N(6)-dimethylallyladenosine(37) in tRNA + (sulfur carrier)-H + 5'-deoxyadenosine + L-methionine + A + S-adenosyl-L-homocysteine + 2 H(+)</text>
        <dbReference type="Rhea" id="RHEA:37067"/>
        <dbReference type="Rhea" id="RHEA-COMP:10375"/>
        <dbReference type="Rhea" id="RHEA-COMP:10376"/>
        <dbReference type="Rhea" id="RHEA-COMP:14737"/>
        <dbReference type="Rhea" id="RHEA-COMP:14739"/>
        <dbReference type="ChEBI" id="CHEBI:13193"/>
        <dbReference type="ChEBI" id="CHEBI:15378"/>
        <dbReference type="ChEBI" id="CHEBI:17319"/>
        <dbReference type="ChEBI" id="CHEBI:17499"/>
        <dbReference type="ChEBI" id="CHEBI:29917"/>
        <dbReference type="ChEBI" id="CHEBI:57844"/>
        <dbReference type="ChEBI" id="CHEBI:57856"/>
        <dbReference type="ChEBI" id="CHEBI:59789"/>
        <dbReference type="ChEBI" id="CHEBI:64428"/>
        <dbReference type="ChEBI" id="CHEBI:74415"/>
        <dbReference type="ChEBI" id="CHEBI:74417"/>
        <dbReference type="EC" id="2.8.4.3"/>
    </reaction>
</comment>
<comment type="cofactor">
    <cofactor evidence="1">
        <name>[4Fe-4S] cluster</name>
        <dbReference type="ChEBI" id="CHEBI:49883"/>
    </cofactor>
    <text evidence="1">Binds 2 [4Fe-4S] clusters. One cluster is coordinated with 3 cysteines and an exchangeable S-adenosyl-L-methionine.</text>
</comment>
<comment type="subunit">
    <text evidence="1">Monomer.</text>
</comment>
<comment type="subcellular location">
    <subcellularLocation>
        <location evidence="1">Cytoplasm</location>
    </subcellularLocation>
</comment>
<comment type="similarity">
    <text evidence="1">Belongs to the methylthiotransferase family. MiaB subfamily.</text>
</comment>
<sequence>MNELTGADFKSATADDNKKLFIETYGCQMNVADSEVIASVMQMAGYSVAETLEEADAVFMNTCSIRDNAEQKILNRLEFFHSLKKKKKALIVGVLGCMAERVKDDLITNHHVDLVVGPDAYLTLPELIAAVEAGEKAINVDLSTTETYRDVIPSRICGNHISGFVSIMRGCNNFCTYCIVPYTRGRERSRDVESILNEVADLVAKGYKEVTLLGQNVNSYRFEKPTGEVVTFPMLLRMVAEAAPGVRIRFTTSHPKDMSDETLEVIAQVPNVCKHIHLPVQSGSSRILKLMNRKYTREWYLDRVAAIKRIIPDCGLTTDIFSGFHSETEEDHQLSLSLMEECGYDAAFMFKYSERPGTYASKHLEDNVPEDVKVRRLNEIIALQNRLSAESNQRCIGKTYEVLVEGVSKRSRDQLFGRTEQNRVVVFDRGTHRIGDFVNVRVTEASSATLKGEEV</sequence>